<keyword id="KW-0131">Cell cycle</keyword>
<keyword id="KW-0132">Cell division</keyword>
<keyword id="KW-0143">Chaperone</keyword>
<keyword id="KW-0963">Cytoplasm</keyword>
<keyword id="KW-0413">Isomerase</keyword>
<keyword id="KW-1185">Reference proteome</keyword>
<keyword id="KW-0697">Rotamase</keyword>
<proteinExistence type="inferred from homology"/>
<accession>Q7NDP0</accession>
<sequence>MKVTQEKLPRSQMGLNVEVEGEKSKQAYEKLVRDTMRTARIPGFRPGKAPRQLVLQFYGKERLRAQALENLIDSSLKEAIEQESIASLGNLQLRDSFEELLGRYQPGEPLSFKAAVDVQPEVQLGTYTGLTVRYSEVPYEAKQVDDQLEQYREQRAVLVPVEGRAAEVGDTAVIDFAGTKAADGNEIVGGKATDFEVELLPGRLIAGFTEGIIGMQIGESTELALRFPDDYPQQELAGVDAKFAVSLKDLKIKELPVLDDDFAGDISEFETLEALRAFLEQQQQEQAAEKTRANRDAAIIKALVAETTVDLPETLVNREVQFLAEQSFRNLQQQGIDPSRIFTEENMPRVRETLRVDAENRLKRTLALAQVARAENIVVEEEQVAARIVELRSELEEEVSEQALAEFAREEMLTEKILEWLAEHSTIELTLPGEAIEPGSGEDAPPEVAAGATEPEAQPNS</sequence>
<reference key="1">
    <citation type="journal article" date="2003" name="DNA Res.">
        <title>Complete genome structure of Gloeobacter violaceus PCC 7421, a cyanobacterium that lacks thylakoids.</title>
        <authorList>
            <person name="Nakamura Y."/>
            <person name="Kaneko T."/>
            <person name="Sato S."/>
            <person name="Mimuro M."/>
            <person name="Miyashita H."/>
            <person name="Tsuchiya T."/>
            <person name="Sasamoto S."/>
            <person name="Watanabe A."/>
            <person name="Kawashima K."/>
            <person name="Kishida Y."/>
            <person name="Kiyokawa C."/>
            <person name="Kohara M."/>
            <person name="Matsumoto M."/>
            <person name="Matsuno A."/>
            <person name="Nakazaki N."/>
            <person name="Shimpo S."/>
            <person name="Takeuchi C."/>
            <person name="Yamada M."/>
            <person name="Tabata S."/>
        </authorList>
    </citation>
    <scope>NUCLEOTIDE SEQUENCE [LARGE SCALE GENOMIC DNA]</scope>
    <source>
        <strain>ATCC 29082 / PCC 7421</strain>
    </source>
</reference>
<protein>
    <recommendedName>
        <fullName evidence="1">Trigger factor</fullName>
        <shortName evidence="1">TF</shortName>
        <ecNumber evidence="1">5.2.1.8</ecNumber>
    </recommendedName>
    <alternativeName>
        <fullName evidence="1">PPIase</fullName>
    </alternativeName>
</protein>
<comment type="function">
    <text evidence="1">Involved in protein export. Acts as a chaperone by maintaining the newly synthesized protein in an open conformation. Functions as a peptidyl-prolyl cis-trans isomerase.</text>
</comment>
<comment type="catalytic activity">
    <reaction evidence="1">
        <text>[protein]-peptidylproline (omega=180) = [protein]-peptidylproline (omega=0)</text>
        <dbReference type="Rhea" id="RHEA:16237"/>
        <dbReference type="Rhea" id="RHEA-COMP:10747"/>
        <dbReference type="Rhea" id="RHEA-COMP:10748"/>
        <dbReference type="ChEBI" id="CHEBI:83833"/>
        <dbReference type="ChEBI" id="CHEBI:83834"/>
        <dbReference type="EC" id="5.2.1.8"/>
    </reaction>
</comment>
<comment type="subcellular location">
    <subcellularLocation>
        <location>Cytoplasm</location>
    </subcellularLocation>
    <text evidence="1">About half TF is bound to the ribosome near the polypeptide exit tunnel while the other half is free in the cytoplasm.</text>
</comment>
<comment type="domain">
    <text evidence="1">Consists of 3 domains; the N-terminus binds the ribosome, the middle domain has PPIase activity, while the C-terminus has intrinsic chaperone activity on its own.</text>
</comment>
<comment type="similarity">
    <text evidence="1">Belongs to the FKBP-type PPIase family. Tig subfamily.</text>
</comment>
<gene>
    <name evidence="1" type="primary">tig</name>
    <name type="ordered locus">glr4195</name>
</gene>
<evidence type="ECO:0000255" key="1">
    <source>
        <dbReference type="HAMAP-Rule" id="MF_00303"/>
    </source>
</evidence>
<evidence type="ECO:0000256" key="2">
    <source>
        <dbReference type="SAM" id="MobiDB-lite"/>
    </source>
</evidence>
<feature type="chain" id="PRO_0000179358" description="Trigger factor">
    <location>
        <begin position="1"/>
        <end position="461"/>
    </location>
</feature>
<feature type="domain" description="PPIase FKBP-type" evidence="1">
    <location>
        <begin position="169"/>
        <end position="256"/>
    </location>
</feature>
<feature type="region of interest" description="Disordered" evidence="2">
    <location>
        <begin position="432"/>
        <end position="461"/>
    </location>
</feature>
<name>TIG_GLOVI</name>
<dbReference type="EC" id="5.2.1.8" evidence="1"/>
<dbReference type="EMBL" id="BA000045">
    <property type="protein sequence ID" value="BAC92136.1"/>
    <property type="molecule type" value="Genomic_DNA"/>
</dbReference>
<dbReference type="RefSeq" id="NP_927141.1">
    <property type="nucleotide sequence ID" value="NC_005125.1"/>
</dbReference>
<dbReference type="RefSeq" id="WP_011144179.1">
    <property type="nucleotide sequence ID" value="NC_005125.1"/>
</dbReference>
<dbReference type="SMR" id="Q7NDP0"/>
<dbReference type="FunCoup" id="Q7NDP0">
    <property type="interactions" value="272"/>
</dbReference>
<dbReference type="STRING" id="251221.gene:10761714"/>
<dbReference type="EnsemblBacteria" id="BAC92136">
    <property type="protein sequence ID" value="BAC92136"/>
    <property type="gene ID" value="BAC92136"/>
</dbReference>
<dbReference type="KEGG" id="gvi:glr4195"/>
<dbReference type="PATRIC" id="fig|251221.4.peg.4227"/>
<dbReference type="eggNOG" id="COG0544">
    <property type="taxonomic scope" value="Bacteria"/>
</dbReference>
<dbReference type="HOGENOM" id="CLU_033058_3_1_3"/>
<dbReference type="InParanoid" id="Q7NDP0"/>
<dbReference type="OrthoDB" id="9767721at2"/>
<dbReference type="PhylomeDB" id="Q7NDP0"/>
<dbReference type="Proteomes" id="UP000000557">
    <property type="component" value="Chromosome"/>
</dbReference>
<dbReference type="GO" id="GO:0005737">
    <property type="term" value="C:cytoplasm"/>
    <property type="evidence" value="ECO:0007669"/>
    <property type="project" value="UniProtKB-SubCell"/>
</dbReference>
<dbReference type="GO" id="GO:0003755">
    <property type="term" value="F:peptidyl-prolyl cis-trans isomerase activity"/>
    <property type="evidence" value="ECO:0000318"/>
    <property type="project" value="GO_Central"/>
</dbReference>
<dbReference type="GO" id="GO:0044183">
    <property type="term" value="F:protein folding chaperone"/>
    <property type="evidence" value="ECO:0000318"/>
    <property type="project" value="GO_Central"/>
</dbReference>
<dbReference type="GO" id="GO:0043022">
    <property type="term" value="F:ribosome binding"/>
    <property type="evidence" value="ECO:0000318"/>
    <property type="project" value="GO_Central"/>
</dbReference>
<dbReference type="GO" id="GO:0051083">
    <property type="term" value="P:'de novo' cotranslational protein folding"/>
    <property type="evidence" value="ECO:0000318"/>
    <property type="project" value="GO_Central"/>
</dbReference>
<dbReference type="GO" id="GO:0051301">
    <property type="term" value="P:cell division"/>
    <property type="evidence" value="ECO:0007669"/>
    <property type="project" value="UniProtKB-KW"/>
</dbReference>
<dbReference type="GO" id="GO:0061077">
    <property type="term" value="P:chaperone-mediated protein folding"/>
    <property type="evidence" value="ECO:0000318"/>
    <property type="project" value="GO_Central"/>
</dbReference>
<dbReference type="GO" id="GO:0015031">
    <property type="term" value="P:protein transport"/>
    <property type="evidence" value="ECO:0007669"/>
    <property type="project" value="UniProtKB-UniRule"/>
</dbReference>
<dbReference type="GO" id="GO:0043335">
    <property type="term" value="P:protein unfolding"/>
    <property type="evidence" value="ECO:0000318"/>
    <property type="project" value="GO_Central"/>
</dbReference>
<dbReference type="FunFam" id="3.10.50.40:FF:000001">
    <property type="entry name" value="Trigger factor"/>
    <property type="match status" value="1"/>
</dbReference>
<dbReference type="FunFam" id="3.30.70.1050:FF:000004">
    <property type="entry name" value="Trigger factor"/>
    <property type="match status" value="1"/>
</dbReference>
<dbReference type="Gene3D" id="3.10.50.40">
    <property type="match status" value="1"/>
</dbReference>
<dbReference type="Gene3D" id="3.30.70.1050">
    <property type="entry name" value="Trigger factor ribosome-binding domain"/>
    <property type="match status" value="1"/>
</dbReference>
<dbReference type="Gene3D" id="1.10.3120.10">
    <property type="entry name" value="Trigger factor, C-terminal domain"/>
    <property type="match status" value="1"/>
</dbReference>
<dbReference type="HAMAP" id="MF_00303">
    <property type="entry name" value="Trigger_factor_Tig"/>
    <property type="match status" value="1"/>
</dbReference>
<dbReference type="InterPro" id="IPR046357">
    <property type="entry name" value="PPIase_dom_sf"/>
</dbReference>
<dbReference type="InterPro" id="IPR001179">
    <property type="entry name" value="PPIase_FKBP_dom"/>
</dbReference>
<dbReference type="InterPro" id="IPR005215">
    <property type="entry name" value="Trig_fac"/>
</dbReference>
<dbReference type="InterPro" id="IPR008880">
    <property type="entry name" value="Trigger_fac_C"/>
</dbReference>
<dbReference type="InterPro" id="IPR037041">
    <property type="entry name" value="Trigger_fac_C_sf"/>
</dbReference>
<dbReference type="InterPro" id="IPR008881">
    <property type="entry name" value="Trigger_fac_ribosome-bd_bac"/>
</dbReference>
<dbReference type="InterPro" id="IPR036611">
    <property type="entry name" value="Trigger_fac_ribosome-bd_sf"/>
</dbReference>
<dbReference type="InterPro" id="IPR027304">
    <property type="entry name" value="Trigger_fact/SurA_dom_sf"/>
</dbReference>
<dbReference type="NCBIfam" id="TIGR00115">
    <property type="entry name" value="tig"/>
    <property type="match status" value="1"/>
</dbReference>
<dbReference type="PANTHER" id="PTHR30560">
    <property type="entry name" value="TRIGGER FACTOR CHAPERONE AND PEPTIDYL-PROLYL CIS/TRANS ISOMERASE"/>
    <property type="match status" value="1"/>
</dbReference>
<dbReference type="PANTHER" id="PTHR30560:SF3">
    <property type="entry name" value="TRIGGER FACTOR-LIKE PROTEIN TIG, CHLOROPLASTIC"/>
    <property type="match status" value="1"/>
</dbReference>
<dbReference type="Pfam" id="PF00254">
    <property type="entry name" value="FKBP_C"/>
    <property type="match status" value="1"/>
</dbReference>
<dbReference type="Pfam" id="PF05698">
    <property type="entry name" value="Trigger_C"/>
    <property type="match status" value="1"/>
</dbReference>
<dbReference type="Pfam" id="PF05697">
    <property type="entry name" value="Trigger_N"/>
    <property type="match status" value="1"/>
</dbReference>
<dbReference type="PIRSF" id="PIRSF003095">
    <property type="entry name" value="Trigger_factor"/>
    <property type="match status" value="1"/>
</dbReference>
<dbReference type="SUPFAM" id="SSF54534">
    <property type="entry name" value="FKBP-like"/>
    <property type="match status" value="1"/>
</dbReference>
<dbReference type="SUPFAM" id="SSF109998">
    <property type="entry name" value="Triger factor/SurA peptide-binding domain-like"/>
    <property type="match status" value="1"/>
</dbReference>
<dbReference type="SUPFAM" id="SSF102735">
    <property type="entry name" value="Trigger factor ribosome-binding domain"/>
    <property type="match status" value="1"/>
</dbReference>
<dbReference type="PROSITE" id="PS50059">
    <property type="entry name" value="FKBP_PPIASE"/>
    <property type="match status" value="1"/>
</dbReference>
<organism>
    <name type="scientific">Gloeobacter violaceus (strain ATCC 29082 / PCC 7421)</name>
    <dbReference type="NCBI Taxonomy" id="251221"/>
    <lineage>
        <taxon>Bacteria</taxon>
        <taxon>Bacillati</taxon>
        <taxon>Cyanobacteriota</taxon>
        <taxon>Cyanophyceae</taxon>
        <taxon>Gloeobacterales</taxon>
        <taxon>Gloeobacteraceae</taxon>
        <taxon>Gloeobacter</taxon>
    </lineage>
</organism>